<accession>B7I5G3</accession>
<sequence length="143" mass="15462">MAIERTLSIVKPDAVSKNHIGEIFARFEKAGLKIVATKMKHLSQADAEGFYAEHKERGFFGDLVAFMTSGPVVVSVLEGENAVLAHREILGATNPKEAAPGTIRADFAVSIDENAAHGSDSVASAEREIAYFFADNEICPRTR</sequence>
<comment type="function">
    <text evidence="3">Major role in the synthesis of nucleoside triphosphates other than ATP. The ATP gamma phosphate is transferred to the NDP beta phosphate via a ping-pong mechanism, using a phosphorylated active-site intermediate.</text>
</comment>
<comment type="function">
    <text evidence="1">(Microbial infection) Catalyzes the phosphorylation of dZDP to dZTP, when the bacterium is infected by a phage that produces the substrate for the synthesis of dZTP (2- amino-2'-deoxyadenosine 5'-triphosphate), which is then used by the phage as a DNA polymerase substrate.</text>
</comment>
<comment type="catalytic activity">
    <reaction evidence="2">
        <text>dZDP + ATP = dZTP + ADP</text>
        <dbReference type="Rhea" id="RHEA:67644"/>
        <dbReference type="ChEBI" id="CHEBI:30616"/>
        <dbReference type="ChEBI" id="CHEBI:172929"/>
        <dbReference type="ChEBI" id="CHEBI:172931"/>
        <dbReference type="ChEBI" id="CHEBI:456216"/>
    </reaction>
</comment>
<comment type="catalytic activity">
    <reaction evidence="3">
        <text>a 2'-deoxyribonucleoside 5'-diphosphate + ATP = a 2'-deoxyribonucleoside 5'-triphosphate + ADP</text>
        <dbReference type="Rhea" id="RHEA:44640"/>
        <dbReference type="ChEBI" id="CHEBI:30616"/>
        <dbReference type="ChEBI" id="CHEBI:61560"/>
        <dbReference type="ChEBI" id="CHEBI:73316"/>
        <dbReference type="ChEBI" id="CHEBI:456216"/>
        <dbReference type="EC" id="2.7.4.6"/>
    </reaction>
</comment>
<comment type="catalytic activity">
    <reaction evidence="3">
        <text>a ribonucleoside 5'-diphosphate + ATP = a ribonucleoside 5'-triphosphate + ADP</text>
        <dbReference type="Rhea" id="RHEA:18113"/>
        <dbReference type="ChEBI" id="CHEBI:30616"/>
        <dbReference type="ChEBI" id="CHEBI:57930"/>
        <dbReference type="ChEBI" id="CHEBI:61557"/>
        <dbReference type="ChEBI" id="CHEBI:456216"/>
        <dbReference type="EC" id="2.7.4.6"/>
    </reaction>
</comment>
<comment type="cofactor">
    <cofactor evidence="3">
        <name>Mg(2+)</name>
        <dbReference type="ChEBI" id="CHEBI:18420"/>
    </cofactor>
</comment>
<comment type="pathway">
    <text evidence="2">Purine metabolism.</text>
</comment>
<comment type="subunit">
    <text evidence="3">Homotetramer.</text>
</comment>
<comment type="subcellular location">
    <subcellularLocation>
        <location evidence="3">Cytoplasm</location>
    </subcellularLocation>
</comment>
<comment type="similarity">
    <text evidence="3">Belongs to the NDK family.</text>
</comment>
<protein>
    <recommendedName>
        <fullName evidence="3">Nucleoside diphosphate kinase</fullName>
        <shortName evidence="3">NDK</shortName>
        <shortName evidence="3">NDP kinase</shortName>
        <ecNumber evidence="3">2.7.4.6</ecNumber>
    </recommendedName>
    <alternativeName>
        <fullName evidence="3">Nucleoside-2-P kinase</fullName>
    </alternativeName>
</protein>
<feature type="chain" id="PRO_1000192244" description="Nucleoside diphosphate kinase">
    <location>
        <begin position="1"/>
        <end position="143"/>
    </location>
</feature>
<feature type="active site" description="Pros-phosphohistidine intermediate" evidence="3">
    <location>
        <position position="117"/>
    </location>
</feature>
<feature type="binding site" evidence="3">
    <location>
        <position position="11"/>
    </location>
    <ligand>
        <name>ATP</name>
        <dbReference type="ChEBI" id="CHEBI:30616"/>
    </ligand>
</feature>
<feature type="binding site" evidence="3">
    <location>
        <position position="59"/>
    </location>
    <ligand>
        <name>ATP</name>
        <dbReference type="ChEBI" id="CHEBI:30616"/>
    </ligand>
</feature>
<feature type="binding site" evidence="3">
    <location>
        <position position="87"/>
    </location>
    <ligand>
        <name>ATP</name>
        <dbReference type="ChEBI" id="CHEBI:30616"/>
    </ligand>
</feature>
<feature type="binding site" evidence="3">
    <location>
        <position position="93"/>
    </location>
    <ligand>
        <name>ATP</name>
        <dbReference type="ChEBI" id="CHEBI:30616"/>
    </ligand>
</feature>
<feature type="binding site" evidence="3">
    <location>
        <position position="104"/>
    </location>
    <ligand>
        <name>ATP</name>
        <dbReference type="ChEBI" id="CHEBI:30616"/>
    </ligand>
</feature>
<feature type="binding site" evidence="3">
    <location>
        <position position="114"/>
    </location>
    <ligand>
        <name>ATP</name>
        <dbReference type="ChEBI" id="CHEBI:30616"/>
    </ligand>
</feature>
<organism>
    <name type="scientific">Acinetobacter baumannii (strain AB0057)</name>
    <dbReference type="NCBI Taxonomy" id="480119"/>
    <lineage>
        <taxon>Bacteria</taxon>
        <taxon>Pseudomonadati</taxon>
        <taxon>Pseudomonadota</taxon>
        <taxon>Gammaproteobacteria</taxon>
        <taxon>Moraxellales</taxon>
        <taxon>Moraxellaceae</taxon>
        <taxon>Acinetobacter</taxon>
        <taxon>Acinetobacter calcoaceticus/baumannii complex</taxon>
    </lineage>
</organism>
<reference key="1">
    <citation type="journal article" date="2008" name="J. Bacteriol.">
        <title>Comparative genome sequence analysis of multidrug-resistant Acinetobacter baumannii.</title>
        <authorList>
            <person name="Adams M.D."/>
            <person name="Goglin K."/>
            <person name="Molyneaux N."/>
            <person name="Hujer K.M."/>
            <person name="Lavender H."/>
            <person name="Jamison J.J."/>
            <person name="MacDonald I.J."/>
            <person name="Martin K.M."/>
            <person name="Russo T."/>
            <person name="Campagnari A.A."/>
            <person name="Hujer A.M."/>
            <person name="Bonomo R.A."/>
            <person name="Gill S.R."/>
        </authorList>
    </citation>
    <scope>NUCLEOTIDE SEQUENCE [LARGE SCALE GENOMIC DNA]</scope>
    <source>
        <strain>AB0057</strain>
    </source>
</reference>
<dbReference type="EC" id="2.7.4.6" evidence="3"/>
<dbReference type="EMBL" id="CP001182">
    <property type="protein sequence ID" value="ACJ40021.1"/>
    <property type="molecule type" value="Genomic_DNA"/>
</dbReference>
<dbReference type="RefSeq" id="WP_000963851.1">
    <property type="nucleotide sequence ID" value="NC_011586.2"/>
</dbReference>
<dbReference type="SMR" id="B7I5G3"/>
<dbReference type="GeneID" id="92892501"/>
<dbReference type="KEGG" id="abn:AB57_0600"/>
<dbReference type="HOGENOM" id="CLU_060216_8_1_6"/>
<dbReference type="Proteomes" id="UP000007094">
    <property type="component" value="Chromosome"/>
</dbReference>
<dbReference type="GO" id="GO:0005737">
    <property type="term" value="C:cytoplasm"/>
    <property type="evidence" value="ECO:0007669"/>
    <property type="project" value="UniProtKB-SubCell"/>
</dbReference>
<dbReference type="GO" id="GO:0005524">
    <property type="term" value="F:ATP binding"/>
    <property type="evidence" value="ECO:0007669"/>
    <property type="project" value="UniProtKB-UniRule"/>
</dbReference>
<dbReference type="GO" id="GO:0046872">
    <property type="term" value="F:metal ion binding"/>
    <property type="evidence" value="ECO:0007669"/>
    <property type="project" value="UniProtKB-KW"/>
</dbReference>
<dbReference type="GO" id="GO:0004550">
    <property type="term" value="F:nucleoside diphosphate kinase activity"/>
    <property type="evidence" value="ECO:0007669"/>
    <property type="project" value="UniProtKB-UniRule"/>
</dbReference>
<dbReference type="GO" id="GO:0006241">
    <property type="term" value="P:CTP biosynthetic process"/>
    <property type="evidence" value="ECO:0007669"/>
    <property type="project" value="UniProtKB-UniRule"/>
</dbReference>
<dbReference type="GO" id="GO:0006183">
    <property type="term" value="P:GTP biosynthetic process"/>
    <property type="evidence" value="ECO:0007669"/>
    <property type="project" value="UniProtKB-UniRule"/>
</dbReference>
<dbReference type="GO" id="GO:0006228">
    <property type="term" value="P:UTP biosynthetic process"/>
    <property type="evidence" value="ECO:0007669"/>
    <property type="project" value="UniProtKB-UniRule"/>
</dbReference>
<dbReference type="CDD" id="cd04413">
    <property type="entry name" value="NDPk_I"/>
    <property type="match status" value="1"/>
</dbReference>
<dbReference type="FunFam" id="3.30.70.141:FF:000001">
    <property type="entry name" value="Nucleoside diphosphate kinase"/>
    <property type="match status" value="1"/>
</dbReference>
<dbReference type="Gene3D" id="3.30.70.141">
    <property type="entry name" value="Nucleoside diphosphate kinase-like domain"/>
    <property type="match status" value="1"/>
</dbReference>
<dbReference type="HAMAP" id="MF_00451">
    <property type="entry name" value="NDP_kinase"/>
    <property type="match status" value="1"/>
</dbReference>
<dbReference type="InterPro" id="IPR034907">
    <property type="entry name" value="NDK-like_dom"/>
</dbReference>
<dbReference type="InterPro" id="IPR036850">
    <property type="entry name" value="NDK-like_dom_sf"/>
</dbReference>
<dbReference type="InterPro" id="IPR001564">
    <property type="entry name" value="Nucleoside_diP_kinase"/>
</dbReference>
<dbReference type="InterPro" id="IPR023005">
    <property type="entry name" value="Nucleoside_diP_kinase_AS"/>
</dbReference>
<dbReference type="NCBIfam" id="NF001908">
    <property type="entry name" value="PRK00668.1"/>
    <property type="match status" value="1"/>
</dbReference>
<dbReference type="PANTHER" id="PTHR46161">
    <property type="entry name" value="NUCLEOSIDE DIPHOSPHATE KINASE"/>
    <property type="match status" value="1"/>
</dbReference>
<dbReference type="PANTHER" id="PTHR46161:SF3">
    <property type="entry name" value="NUCLEOSIDE DIPHOSPHATE KINASE DDB_G0292928-RELATED"/>
    <property type="match status" value="1"/>
</dbReference>
<dbReference type="Pfam" id="PF00334">
    <property type="entry name" value="NDK"/>
    <property type="match status" value="1"/>
</dbReference>
<dbReference type="PRINTS" id="PR01243">
    <property type="entry name" value="NUCDPKINASE"/>
</dbReference>
<dbReference type="SMART" id="SM00562">
    <property type="entry name" value="NDK"/>
    <property type="match status" value="1"/>
</dbReference>
<dbReference type="SUPFAM" id="SSF54919">
    <property type="entry name" value="Nucleoside diphosphate kinase, NDK"/>
    <property type="match status" value="1"/>
</dbReference>
<dbReference type="PROSITE" id="PS00469">
    <property type="entry name" value="NDPK"/>
    <property type="match status" value="1"/>
</dbReference>
<dbReference type="PROSITE" id="PS51374">
    <property type="entry name" value="NDPK_LIKE"/>
    <property type="match status" value="1"/>
</dbReference>
<proteinExistence type="inferred from homology"/>
<keyword id="KW-0067">ATP-binding</keyword>
<keyword id="KW-0963">Cytoplasm</keyword>
<keyword id="KW-0418">Kinase</keyword>
<keyword id="KW-0460">Magnesium</keyword>
<keyword id="KW-0479">Metal-binding</keyword>
<keyword id="KW-0546">Nucleotide metabolism</keyword>
<keyword id="KW-0547">Nucleotide-binding</keyword>
<keyword id="KW-0597">Phosphoprotein</keyword>
<keyword id="KW-0808">Transferase</keyword>
<name>NDK_ACIB5</name>
<evidence type="ECO:0000250" key="1">
    <source>
        <dbReference type="UniProtKB" id="Q9KNM4"/>
    </source>
</evidence>
<evidence type="ECO:0000250" key="2">
    <source>
        <dbReference type="UniProtKB" id="Q9KTX4"/>
    </source>
</evidence>
<evidence type="ECO:0000255" key="3">
    <source>
        <dbReference type="HAMAP-Rule" id="MF_00451"/>
    </source>
</evidence>
<gene>
    <name evidence="3" type="primary">ndk</name>
    <name type="ordered locus">AB57_0600</name>
</gene>